<feature type="chain" id="PRO_0000162104" description="tRNA-dihydrouridine synthase B">
    <location>
        <begin position="1"/>
        <end position="332"/>
    </location>
</feature>
<feature type="active site" description="Proton donor" evidence="1">
    <location>
        <position position="100"/>
    </location>
</feature>
<feature type="binding site" evidence="1">
    <location>
        <begin position="16"/>
        <end position="18"/>
    </location>
    <ligand>
        <name>FMN</name>
        <dbReference type="ChEBI" id="CHEBI:58210"/>
    </ligand>
</feature>
<feature type="binding site" evidence="1">
    <location>
        <position position="70"/>
    </location>
    <ligand>
        <name>FMN</name>
        <dbReference type="ChEBI" id="CHEBI:58210"/>
    </ligand>
</feature>
<feature type="binding site" evidence="1">
    <location>
        <position position="139"/>
    </location>
    <ligand>
        <name>FMN</name>
        <dbReference type="ChEBI" id="CHEBI:58210"/>
    </ligand>
</feature>
<feature type="binding site" evidence="1">
    <location>
        <begin position="200"/>
        <end position="202"/>
    </location>
    <ligand>
        <name>FMN</name>
        <dbReference type="ChEBI" id="CHEBI:58210"/>
    </ligand>
</feature>
<feature type="binding site" evidence="1">
    <location>
        <begin position="224"/>
        <end position="225"/>
    </location>
    <ligand>
        <name>FMN</name>
        <dbReference type="ChEBI" id="CHEBI:58210"/>
    </ligand>
</feature>
<evidence type="ECO:0000255" key="1">
    <source>
        <dbReference type="HAMAP-Rule" id="MF_02042"/>
    </source>
</evidence>
<proteinExistence type="inferred from homology"/>
<name>DUSB_XANAC</name>
<accession>Q8PP72</accession>
<dbReference type="EC" id="1.3.1.-" evidence="1"/>
<dbReference type="EMBL" id="AE008923">
    <property type="protein sequence ID" value="AAM35704.1"/>
    <property type="molecule type" value="Genomic_DNA"/>
</dbReference>
<dbReference type="RefSeq" id="WP_011050554.1">
    <property type="nucleotide sequence ID" value="NC_003919.1"/>
</dbReference>
<dbReference type="SMR" id="Q8PP72"/>
<dbReference type="GeneID" id="66910008"/>
<dbReference type="KEGG" id="xac:XAC0816"/>
<dbReference type="eggNOG" id="COG0042">
    <property type="taxonomic scope" value="Bacteria"/>
</dbReference>
<dbReference type="HOGENOM" id="CLU_013299_0_1_6"/>
<dbReference type="Proteomes" id="UP000000576">
    <property type="component" value="Chromosome"/>
</dbReference>
<dbReference type="GO" id="GO:0050660">
    <property type="term" value="F:flavin adenine dinucleotide binding"/>
    <property type="evidence" value="ECO:0007669"/>
    <property type="project" value="InterPro"/>
</dbReference>
<dbReference type="GO" id="GO:0010181">
    <property type="term" value="F:FMN binding"/>
    <property type="evidence" value="ECO:0007669"/>
    <property type="project" value="UniProtKB-UniRule"/>
</dbReference>
<dbReference type="GO" id="GO:0000049">
    <property type="term" value="F:tRNA binding"/>
    <property type="evidence" value="ECO:0007669"/>
    <property type="project" value="UniProtKB-UniRule"/>
</dbReference>
<dbReference type="GO" id="GO:0017150">
    <property type="term" value="F:tRNA dihydrouridine synthase activity"/>
    <property type="evidence" value="ECO:0007669"/>
    <property type="project" value="UniProtKB-UniRule"/>
</dbReference>
<dbReference type="CDD" id="cd02801">
    <property type="entry name" value="DUS_like_FMN"/>
    <property type="match status" value="1"/>
</dbReference>
<dbReference type="Gene3D" id="3.20.20.70">
    <property type="entry name" value="Aldolase class I"/>
    <property type="match status" value="1"/>
</dbReference>
<dbReference type="Gene3D" id="1.10.1200.80">
    <property type="entry name" value="Putative flavin oxidoreducatase, domain 2"/>
    <property type="match status" value="1"/>
</dbReference>
<dbReference type="HAMAP" id="MF_02042">
    <property type="entry name" value="DusB_subfam"/>
    <property type="match status" value="1"/>
</dbReference>
<dbReference type="InterPro" id="IPR013785">
    <property type="entry name" value="Aldolase_TIM"/>
</dbReference>
<dbReference type="InterPro" id="IPR035587">
    <property type="entry name" value="DUS-like_FMN-bd"/>
</dbReference>
<dbReference type="InterPro" id="IPR001269">
    <property type="entry name" value="DUS_fam"/>
</dbReference>
<dbReference type="InterPro" id="IPR032887">
    <property type="entry name" value="DusB"/>
</dbReference>
<dbReference type="InterPro" id="IPR004652">
    <property type="entry name" value="DusB-like"/>
</dbReference>
<dbReference type="InterPro" id="IPR024036">
    <property type="entry name" value="tRNA-dHydroUridine_Synthase_C"/>
</dbReference>
<dbReference type="InterPro" id="IPR018517">
    <property type="entry name" value="tRNA_hU_synthase_CS"/>
</dbReference>
<dbReference type="NCBIfam" id="TIGR00737">
    <property type="entry name" value="nifR3_yhdG"/>
    <property type="match status" value="1"/>
</dbReference>
<dbReference type="PANTHER" id="PTHR45846">
    <property type="entry name" value="TRNA-DIHYDROURIDINE(47) SYNTHASE [NAD(P)(+)]-LIKE"/>
    <property type="match status" value="1"/>
</dbReference>
<dbReference type="PANTHER" id="PTHR45846:SF1">
    <property type="entry name" value="TRNA-DIHYDROURIDINE(47) SYNTHASE [NAD(P)(+)]-LIKE"/>
    <property type="match status" value="1"/>
</dbReference>
<dbReference type="Pfam" id="PF01207">
    <property type="entry name" value="Dus"/>
    <property type="match status" value="1"/>
</dbReference>
<dbReference type="PIRSF" id="PIRSF006621">
    <property type="entry name" value="Dus"/>
    <property type="match status" value="1"/>
</dbReference>
<dbReference type="SUPFAM" id="SSF51395">
    <property type="entry name" value="FMN-linked oxidoreductases"/>
    <property type="match status" value="1"/>
</dbReference>
<dbReference type="PROSITE" id="PS01136">
    <property type="entry name" value="UPF0034"/>
    <property type="match status" value="1"/>
</dbReference>
<sequence>MQIGPYSIAPKVILAPMAGVTDKPFRLLCKRLGAGLAVSEMTISDPRFWGTRKSLHRMDHAGEPDPISVQIAGTEPQQLAEAARYNVDHGAQLIDINMGCPAKKVCNAWAGSALMRDEELVARILTAVVQAVNVPVTLKIRTGWDCDHRNGPTIARIAQDCGIAALAVHGRTRDQHYTGSAEYATIAQIKAALQIPVVANGDIDSPQKAAQVLRETGADAVMIGRAAQGRPWIFGEVAHFLATGEVLPPPSLAFVRDTLLGHLEALHAFYGQPQGVRIARKHLGWYAKDHPQSADFRAVVNRAETPDAQLALTRDYFDALIAGVPPALSDAA</sequence>
<protein>
    <recommendedName>
        <fullName evidence="1">tRNA-dihydrouridine synthase B</fullName>
        <ecNumber evidence="1">1.3.1.-</ecNumber>
    </recommendedName>
</protein>
<comment type="function">
    <text evidence="1">Catalyzes the synthesis of 5,6-dihydrouridine (D), a modified base found in the D-loop of most tRNAs, via the reduction of the C5-C6 double bond in target uridines.</text>
</comment>
<comment type="catalytic activity">
    <reaction evidence="1">
        <text>a 5,6-dihydrouridine in tRNA + NAD(+) = a uridine in tRNA + NADH + H(+)</text>
        <dbReference type="Rhea" id="RHEA:54452"/>
        <dbReference type="Rhea" id="RHEA-COMP:13339"/>
        <dbReference type="Rhea" id="RHEA-COMP:13887"/>
        <dbReference type="ChEBI" id="CHEBI:15378"/>
        <dbReference type="ChEBI" id="CHEBI:57540"/>
        <dbReference type="ChEBI" id="CHEBI:57945"/>
        <dbReference type="ChEBI" id="CHEBI:65315"/>
        <dbReference type="ChEBI" id="CHEBI:74443"/>
    </reaction>
</comment>
<comment type="catalytic activity">
    <reaction evidence="1">
        <text>a 5,6-dihydrouridine in tRNA + NADP(+) = a uridine in tRNA + NADPH + H(+)</text>
        <dbReference type="Rhea" id="RHEA:23624"/>
        <dbReference type="Rhea" id="RHEA-COMP:13339"/>
        <dbReference type="Rhea" id="RHEA-COMP:13887"/>
        <dbReference type="ChEBI" id="CHEBI:15378"/>
        <dbReference type="ChEBI" id="CHEBI:57783"/>
        <dbReference type="ChEBI" id="CHEBI:58349"/>
        <dbReference type="ChEBI" id="CHEBI:65315"/>
        <dbReference type="ChEBI" id="CHEBI:74443"/>
    </reaction>
</comment>
<comment type="cofactor">
    <cofactor evidence="1">
        <name>FMN</name>
        <dbReference type="ChEBI" id="CHEBI:58210"/>
    </cofactor>
</comment>
<comment type="similarity">
    <text evidence="1">Belongs to the Dus family. DusB subfamily.</text>
</comment>
<keyword id="KW-0285">Flavoprotein</keyword>
<keyword id="KW-0288">FMN</keyword>
<keyword id="KW-0521">NADP</keyword>
<keyword id="KW-0560">Oxidoreductase</keyword>
<keyword id="KW-0694">RNA-binding</keyword>
<keyword id="KW-0819">tRNA processing</keyword>
<keyword id="KW-0820">tRNA-binding</keyword>
<organism>
    <name type="scientific">Xanthomonas axonopodis pv. citri (strain 306)</name>
    <dbReference type="NCBI Taxonomy" id="190486"/>
    <lineage>
        <taxon>Bacteria</taxon>
        <taxon>Pseudomonadati</taxon>
        <taxon>Pseudomonadota</taxon>
        <taxon>Gammaproteobacteria</taxon>
        <taxon>Lysobacterales</taxon>
        <taxon>Lysobacteraceae</taxon>
        <taxon>Xanthomonas</taxon>
    </lineage>
</organism>
<gene>
    <name evidence="1" type="primary">dusB</name>
    <name type="ordered locus">XAC0816</name>
</gene>
<reference key="1">
    <citation type="journal article" date="2002" name="Nature">
        <title>Comparison of the genomes of two Xanthomonas pathogens with differing host specificities.</title>
        <authorList>
            <person name="da Silva A.C.R."/>
            <person name="Ferro J.A."/>
            <person name="Reinach F.C."/>
            <person name="Farah C.S."/>
            <person name="Furlan L.R."/>
            <person name="Quaggio R.B."/>
            <person name="Monteiro-Vitorello C.B."/>
            <person name="Van Sluys M.A."/>
            <person name="Almeida N.F. Jr."/>
            <person name="Alves L.M.C."/>
            <person name="do Amaral A.M."/>
            <person name="Bertolini M.C."/>
            <person name="Camargo L.E.A."/>
            <person name="Camarotte G."/>
            <person name="Cannavan F."/>
            <person name="Cardozo J."/>
            <person name="Chambergo F."/>
            <person name="Ciapina L.P."/>
            <person name="Cicarelli R.M.B."/>
            <person name="Coutinho L.L."/>
            <person name="Cursino-Santos J.R."/>
            <person name="El-Dorry H."/>
            <person name="Faria J.B."/>
            <person name="Ferreira A.J.S."/>
            <person name="Ferreira R.C.C."/>
            <person name="Ferro M.I.T."/>
            <person name="Formighieri E.F."/>
            <person name="Franco M.C."/>
            <person name="Greggio C.C."/>
            <person name="Gruber A."/>
            <person name="Katsuyama A.M."/>
            <person name="Kishi L.T."/>
            <person name="Leite R.P."/>
            <person name="Lemos E.G.M."/>
            <person name="Lemos M.V.F."/>
            <person name="Locali E.C."/>
            <person name="Machado M.A."/>
            <person name="Madeira A.M.B.N."/>
            <person name="Martinez-Rossi N.M."/>
            <person name="Martins E.C."/>
            <person name="Meidanis J."/>
            <person name="Menck C.F.M."/>
            <person name="Miyaki C.Y."/>
            <person name="Moon D.H."/>
            <person name="Moreira L.M."/>
            <person name="Novo M.T.M."/>
            <person name="Okura V.K."/>
            <person name="Oliveira M.C."/>
            <person name="Oliveira V.R."/>
            <person name="Pereira H.A."/>
            <person name="Rossi A."/>
            <person name="Sena J.A.D."/>
            <person name="Silva C."/>
            <person name="de Souza R.F."/>
            <person name="Spinola L.A.F."/>
            <person name="Takita M.A."/>
            <person name="Tamura R.E."/>
            <person name="Teixeira E.C."/>
            <person name="Tezza R.I.D."/>
            <person name="Trindade dos Santos M."/>
            <person name="Truffi D."/>
            <person name="Tsai S.M."/>
            <person name="White F.F."/>
            <person name="Setubal J.C."/>
            <person name="Kitajima J.P."/>
        </authorList>
    </citation>
    <scope>NUCLEOTIDE SEQUENCE [LARGE SCALE GENOMIC DNA]</scope>
    <source>
        <strain>306</strain>
    </source>
</reference>